<keyword id="KW-0025">Alternative splicing</keyword>
<keyword id="KW-0175">Coiled coil</keyword>
<keyword id="KW-0968">Cytoplasmic vesicle</keyword>
<keyword id="KW-1185">Reference proteome</keyword>
<sequence length="459" mass="52946">MKKDKKRNKIPIDNYPIQTLVNMSLNPSRPSSSELVELHVFYVPEGSWNYKLNTISTEVVNKFISAGFLRVSPQLTLRALRERLGEFLGEDAIAEKFLFLKCIGNNLAVVKEKQESELKLKSFAPPYALQPELYLLPVMDHLGNVYSPSTVILDERQTNNGVNEADGTIHRPISVTLFKEELGRDPSLLENTLKELPNKNQEEAGGKATAEKSQIAKNQIGNSELPGSLEDSNNDCFGTKKSQCLWENEDDTAISRRQDNQTAEKEYITLPDHPSLPCQPVLSSGITDISLLQTEREKIIKQMKQVKEERRYLERNREELVKTVEKLFEQSKLKRYHAYNGWKKKYLETKKVTASMEEVLTKLREDLELYYKKLLMQLEAREIKMRPKNLANITDSKNYLIIQITEVQHAIDQLKRKLDTDKMKLIVEVKMRKQAVSDLRTLKTELAQKKKIIHLYNLN</sequence>
<evidence type="ECO:0000250" key="1">
    <source>
        <dbReference type="UniProtKB" id="Q9D5R4"/>
    </source>
</evidence>
<evidence type="ECO:0000255" key="2"/>
<evidence type="ECO:0000256" key="3">
    <source>
        <dbReference type="SAM" id="MobiDB-lite"/>
    </source>
</evidence>
<evidence type="ECO:0000269" key="4">
    <source>
    </source>
</evidence>
<evidence type="ECO:0000303" key="5">
    <source>
    </source>
</evidence>
<evidence type="ECO:0000303" key="6">
    <source ref="1"/>
</evidence>
<evidence type="ECO:0000305" key="7"/>
<reference key="1">
    <citation type="submission" date="2000-09" db="EMBL/GenBank/DDBJ databases">
        <title>Cloning of a novel spermatogenesis gene cDNA from a cDNA array.</title>
        <authorList>
            <person name="Li J.M."/>
            <person name="Sha J.H."/>
            <person name="Zhou Z.M."/>
        </authorList>
    </citation>
    <scope>NUCLEOTIDE SEQUENCE [MRNA] (ISOFORM 2)</scope>
    <source>
        <tissue>Testis</tissue>
    </source>
</reference>
<reference key="2">
    <citation type="journal article" date="2006" name="Nature">
        <title>The DNA sequence and biological annotation of human chromosome 1.</title>
        <authorList>
            <person name="Gregory S.G."/>
            <person name="Barlow K.F."/>
            <person name="McLay K.E."/>
            <person name="Kaul R."/>
            <person name="Swarbreck D."/>
            <person name="Dunham A."/>
            <person name="Scott C.E."/>
            <person name="Howe K.L."/>
            <person name="Woodfine K."/>
            <person name="Spencer C.C.A."/>
            <person name="Jones M.C."/>
            <person name="Gillson C."/>
            <person name="Searle S."/>
            <person name="Zhou Y."/>
            <person name="Kokocinski F."/>
            <person name="McDonald L."/>
            <person name="Evans R."/>
            <person name="Phillips K."/>
            <person name="Atkinson A."/>
            <person name="Cooper R."/>
            <person name="Jones C."/>
            <person name="Hall R.E."/>
            <person name="Andrews T.D."/>
            <person name="Lloyd C."/>
            <person name="Ainscough R."/>
            <person name="Almeida J.P."/>
            <person name="Ambrose K.D."/>
            <person name="Anderson F."/>
            <person name="Andrew R.W."/>
            <person name="Ashwell R.I.S."/>
            <person name="Aubin K."/>
            <person name="Babbage A.K."/>
            <person name="Bagguley C.L."/>
            <person name="Bailey J."/>
            <person name="Beasley H."/>
            <person name="Bethel G."/>
            <person name="Bird C.P."/>
            <person name="Bray-Allen S."/>
            <person name="Brown J.Y."/>
            <person name="Brown A.J."/>
            <person name="Buckley D."/>
            <person name="Burton J."/>
            <person name="Bye J."/>
            <person name="Carder C."/>
            <person name="Chapman J.C."/>
            <person name="Clark S.Y."/>
            <person name="Clarke G."/>
            <person name="Clee C."/>
            <person name="Cobley V."/>
            <person name="Collier R.E."/>
            <person name="Corby N."/>
            <person name="Coville G.J."/>
            <person name="Davies J."/>
            <person name="Deadman R."/>
            <person name="Dunn M."/>
            <person name="Earthrowl M."/>
            <person name="Ellington A.G."/>
            <person name="Errington H."/>
            <person name="Frankish A."/>
            <person name="Frankland J."/>
            <person name="French L."/>
            <person name="Garner P."/>
            <person name="Garnett J."/>
            <person name="Gay L."/>
            <person name="Ghori M.R.J."/>
            <person name="Gibson R."/>
            <person name="Gilby L.M."/>
            <person name="Gillett W."/>
            <person name="Glithero R.J."/>
            <person name="Grafham D.V."/>
            <person name="Griffiths C."/>
            <person name="Griffiths-Jones S."/>
            <person name="Grocock R."/>
            <person name="Hammond S."/>
            <person name="Harrison E.S.I."/>
            <person name="Hart E."/>
            <person name="Haugen E."/>
            <person name="Heath P.D."/>
            <person name="Holmes S."/>
            <person name="Holt K."/>
            <person name="Howden P.J."/>
            <person name="Hunt A.R."/>
            <person name="Hunt S.E."/>
            <person name="Hunter G."/>
            <person name="Isherwood J."/>
            <person name="James R."/>
            <person name="Johnson C."/>
            <person name="Johnson D."/>
            <person name="Joy A."/>
            <person name="Kay M."/>
            <person name="Kershaw J.K."/>
            <person name="Kibukawa M."/>
            <person name="Kimberley A.M."/>
            <person name="King A."/>
            <person name="Knights A.J."/>
            <person name="Lad H."/>
            <person name="Laird G."/>
            <person name="Lawlor S."/>
            <person name="Leongamornlert D.A."/>
            <person name="Lloyd D.M."/>
            <person name="Loveland J."/>
            <person name="Lovell J."/>
            <person name="Lush M.J."/>
            <person name="Lyne R."/>
            <person name="Martin S."/>
            <person name="Mashreghi-Mohammadi M."/>
            <person name="Matthews L."/>
            <person name="Matthews N.S.W."/>
            <person name="McLaren S."/>
            <person name="Milne S."/>
            <person name="Mistry S."/>
            <person name="Moore M.J.F."/>
            <person name="Nickerson T."/>
            <person name="O'Dell C.N."/>
            <person name="Oliver K."/>
            <person name="Palmeiri A."/>
            <person name="Palmer S.A."/>
            <person name="Parker A."/>
            <person name="Patel D."/>
            <person name="Pearce A.V."/>
            <person name="Peck A.I."/>
            <person name="Pelan S."/>
            <person name="Phelps K."/>
            <person name="Phillimore B.J."/>
            <person name="Plumb R."/>
            <person name="Rajan J."/>
            <person name="Raymond C."/>
            <person name="Rouse G."/>
            <person name="Saenphimmachak C."/>
            <person name="Sehra H.K."/>
            <person name="Sheridan E."/>
            <person name="Shownkeen R."/>
            <person name="Sims S."/>
            <person name="Skuce C.D."/>
            <person name="Smith M."/>
            <person name="Steward C."/>
            <person name="Subramanian S."/>
            <person name="Sycamore N."/>
            <person name="Tracey A."/>
            <person name="Tromans A."/>
            <person name="Van Helmond Z."/>
            <person name="Wall M."/>
            <person name="Wallis J.M."/>
            <person name="White S."/>
            <person name="Whitehead S.L."/>
            <person name="Wilkinson J.E."/>
            <person name="Willey D.L."/>
            <person name="Williams H."/>
            <person name="Wilming L."/>
            <person name="Wray P.W."/>
            <person name="Wu Z."/>
            <person name="Coulson A."/>
            <person name="Vaudin M."/>
            <person name="Sulston J.E."/>
            <person name="Durbin R.M."/>
            <person name="Hubbard T."/>
            <person name="Wooster R."/>
            <person name="Dunham I."/>
            <person name="Carter N.P."/>
            <person name="McVean G."/>
            <person name="Ross M.T."/>
            <person name="Harrow J."/>
            <person name="Olson M.V."/>
            <person name="Beck S."/>
            <person name="Rogers J."/>
            <person name="Bentley D.R."/>
        </authorList>
    </citation>
    <scope>NUCLEOTIDE SEQUENCE [LARGE SCALE GENOMIC DNA]</scope>
</reference>
<reference key="3">
    <citation type="journal article" date="2004" name="Genome Res.">
        <title>The status, quality, and expansion of the NIH full-length cDNA project: the Mammalian Gene Collection (MGC).</title>
        <authorList>
            <consortium name="The MGC Project Team"/>
        </authorList>
    </citation>
    <scope>NUCLEOTIDE SEQUENCE [LARGE SCALE MRNA] (ISOFORMS 2 AND 3)</scope>
    <scope>VARIANT LEU-175</scope>
    <source>
        <tissue>Testis</tissue>
    </source>
</reference>
<feature type="chain" id="PRO_0000349215" description="Spermatogenesis-associated protein 1">
    <location>
        <begin position="1"/>
        <end position="459"/>
    </location>
</feature>
<feature type="region of interest" description="Disordered" evidence="3">
    <location>
        <begin position="193"/>
        <end position="213"/>
    </location>
</feature>
<feature type="coiled-coil region" evidence="2">
    <location>
        <begin position="287"/>
        <end position="374"/>
    </location>
</feature>
<feature type="coiled-coil region" evidence="2">
    <location>
        <begin position="400"/>
        <end position="453"/>
    </location>
</feature>
<feature type="compositionally biased region" description="Basic and acidic residues" evidence="3">
    <location>
        <begin position="193"/>
        <end position="205"/>
    </location>
</feature>
<feature type="splice variant" id="VSP_035223" description="In isoform 2." evidence="5 6">
    <original>QCLWENEDDTAISRRQDNQTAEKEYITLPDHPSLPCQPVLSS</original>
    <variation>VFGKMKMIQLSVEDRTIRQLKKSTSPYQITLHFLVNLFFLQE</variation>
    <location>
        <begin position="243"/>
        <end position="284"/>
    </location>
</feature>
<feature type="splice variant" id="VSP_035224" description="In isoform 2." evidence="5 6">
    <location>
        <begin position="285"/>
        <end position="459"/>
    </location>
</feature>
<feature type="splice variant" id="VSP_039875" description="In isoform 3." evidence="5">
    <location>
        <begin position="359"/>
        <end position="459"/>
    </location>
</feature>
<feature type="sequence variant" id="VAR_046284" description="In dbSNP:rs10493753." evidence="4">
    <original>V</original>
    <variation>L</variation>
    <location>
        <position position="175"/>
    </location>
</feature>
<feature type="sequence conflict" description="In Ref. 1; AAG22047." evidence="7" ref="1">
    <original>K</original>
    <variation>R</variation>
    <location>
        <position position="3"/>
    </location>
</feature>
<feature type="sequence conflict" description="In Ref. 1; AAG22047." evidence="7" ref="1">
    <original>L</original>
    <variation>P</variation>
    <location>
        <position position="129"/>
    </location>
</feature>
<organism>
    <name type="scientific">Homo sapiens</name>
    <name type="common">Human</name>
    <dbReference type="NCBI Taxonomy" id="9606"/>
    <lineage>
        <taxon>Eukaryota</taxon>
        <taxon>Metazoa</taxon>
        <taxon>Chordata</taxon>
        <taxon>Craniata</taxon>
        <taxon>Vertebrata</taxon>
        <taxon>Euteleostomi</taxon>
        <taxon>Mammalia</taxon>
        <taxon>Eutheria</taxon>
        <taxon>Euarchontoglires</taxon>
        <taxon>Primates</taxon>
        <taxon>Haplorrhini</taxon>
        <taxon>Catarrhini</taxon>
        <taxon>Hominidae</taxon>
        <taxon>Homo</taxon>
    </lineage>
</organism>
<dbReference type="EMBL" id="AF306347">
    <property type="protein sequence ID" value="AAG22047.1"/>
    <property type="molecule type" value="mRNA"/>
</dbReference>
<dbReference type="EMBL" id="AL359762">
    <property type="status" value="NOT_ANNOTATED_CDS"/>
    <property type="molecule type" value="Genomic_DNA"/>
</dbReference>
<dbReference type="EMBL" id="BC119641">
    <property type="protein sequence ID" value="AAI19642.1"/>
    <property type="molecule type" value="mRNA"/>
</dbReference>
<dbReference type="EMBL" id="BC119642">
    <property type="protein sequence ID" value="AAI19643.1"/>
    <property type="molecule type" value="mRNA"/>
</dbReference>
<dbReference type="EMBL" id="BC127634">
    <property type="protein sequence ID" value="AAI27635.1"/>
    <property type="molecule type" value="mRNA"/>
</dbReference>
<dbReference type="RefSeq" id="NP_001297085.1">
    <property type="nucleotide sequence ID" value="NM_001310156.1"/>
</dbReference>
<dbReference type="RefSeq" id="XP_011540818.1">
    <molecule id="Q5VX52-2"/>
    <property type="nucleotide sequence ID" value="XM_011542516.2"/>
</dbReference>
<dbReference type="RefSeq" id="XP_011540819.1">
    <molecule id="Q5VX52-2"/>
    <property type="nucleotide sequence ID" value="XM_011542517.2"/>
</dbReference>
<dbReference type="RefSeq" id="XP_024302057.1">
    <molecule id="Q5VX52-1"/>
    <property type="nucleotide sequence ID" value="XM_024446289.2"/>
</dbReference>
<dbReference type="RefSeq" id="XP_047272033.1">
    <molecule id="Q5VX52-2"/>
    <property type="nucleotide sequence ID" value="XM_047416077.1"/>
</dbReference>
<dbReference type="RefSeq" id="XP_054189667.1">
    <molecule id="Q5VX52-1"/>
    <property type="nucleotide sequence ID" value="XM_054333692.1"/>
</dbReference>
<dbReference type="RefSeq" id="XP_054189670.1">
    <molecule id="Q5VX52-2"/>
    <property type="nucleotide sequence ID" value="XM_054333695.1"/>
</dbReference>
<dbReference type="RefSeq" id="XP_054189671.1">
    <molecule id="Q5VX52-2"/>
    <property type="nucleotide sequence ID" value="XM_054333696.1"/>
</dbReference>
<dbReference type="RefSeq" id="XP_054189672.1">
    <molecule id="Q5VX52-2"/>
    <property type="nucleotide sequence ID" value="XM_054333697.1"/>
</dbReference>
<dbReference type="SMR" id="Q5VX52"/>
<dbReference type="BioGRID" id="122096">
    <property type="interactions" value="35"/>
</dbReference>
<dbReference type="FunCoup" id="Q5VX52">
    <property type="interactions" value="137"/>
</dbReference>
<dbReference type="IntAct" id="Q5VX52">
    <property type="interactions" value="26"/>
</dbReference>
<dbReference type="STRING" id="9606.ENSP00000492019"/>
<dbReference type="iPTMnet" id="Q5VX52"/>
<dbReference type="PhosphoSitePlus" id="Q5VX52"/>
<dbReference type="BioMuta" id="SPATA1"/>
<dbReference type="DMDM" id="205830058"/>
<dbReference type="jPOST" id="Q5VX52"/>
<dbReference type="MassIVE" id="Q5VX52"/>
<dbReference type="PeptideAtlas" id="Q5VX52"/>
<dbReference type="ProteomicsDB" id="65572">
    <molecule id="Q5VX52-1"/>
</dbReference>
<dbReference type="ProteomicsDB" id="65573">
    <molecule id="Q5VX52-2"/>
</dbReference>
<dbReference type="ProteomicsDB" id="65574">
    <molecule id="Q5VX52-4"/>
</dbReference>
<dbReference type="TopDownProteomics" id="Q5VX52-1">
    <molecule id="Q5VX52-1"/>
</dbReference>
<dbReference type="TopDownProteomics" id="Q5VX52-2">
    <molecule id="Q5VX52-2"/>
</dbReference>
<dbReference type="Antibodypedia" id="78709">
    <property type="antibodies" value="19 antibodies from 8 providers"/>
</dbReference>
<dbReference type="DNASU" id="100505741"/>
<dbReference type="GeneID" id="100505741"/>
<dbReference type="KEGG" id="hsa:100505741"/>
<dbReference type="AGR" id="HGNC:14682"/>
<dbReference type="CTD" id="100505741"/>
<dbReference type="GeneCards" id="SPATA1"/>
<dbReference type="HGNC" id="HGNC:14682">
    <property type="gene designation" value="SPATA1"/>
</dbReference>
<dbReference type="neXtProt" id="NX_Q5VX52"/>
<dbReference type="PharmGKB" id="PA37910"/>
<dbReference type="VEuPathDB" id="HostDB:ENSG00000122432"/>
<dbReference type="InParanoid" id="Q5VX52"/>
<dbReference type="OrthoDB" id="9901850at2759"/>
<dbReference type="PAN-GO" id="Q5VX52">
    <property type="GO annotations" value="0 GO annotations based on evolutionary models"/>
</dbReference>
<dbReference type="PhylomeDB" id="Q5VX52"/>
<dbReference type="PathwayCommons" id="Q5VX52"/>
<dbReference type="SignaLink" id="Q5VX52"/>
<dbReference type="BioGRID-ORCS" id="100505741">
    <property type="hits" value="0 hits in 35 CRISPR screens"/>
</dbReference>
<dbReference type="ChiTaRS" id="SPATA1">
    <property type="organism name" value="human"/>
</dbReference>
<dbReference type="GenomeRNAi" id="100505741"/>
<dbReference type="Pharos" id="Q5VX52">
    <property type="development level" value="Tdark"/>
</dbReference>
<dbReference type="PRO" id="PR:Q5VX52"/>
<dbReference type="Proteomes" id="UP000005640">
    <property type="component" value="Chromosome 1"/>
</dbReference>
<dbReference type="RNAct" id="Q5VX52">
    <property type="molecule type" value="protein"/>
</dbReference>
<dbReference type="Bgee" id="ENSG00000122432">
    <property type="expression patterns" value="Expressed in buccal mucosa cell and 104 other cell types or tissues"/>
</dbReference>
<dbReference type="GO" id="GO:0001669">
    <property type="term" value="C:acrosomal vesicle"/>
    <property type="evidence" value="ECO:0000250"/>
    <property type="project" value="UniProtKB"/>
</dbReference>
<dbReference type="InterPro" id="IPR039062">
    <property type="entry name" value="SPAT1"/>
</dbReference>
<dbReference type="InterPro" id="IPR031478">
    <property type="entry name" value="SPATA1_C"/>
</dbReference>
<dbReference type="PANTHER" id="PTHR14421">
    <property type="entry name" value="SPERMATOGENESIS-ASSOCIATED PROTEIN 1"/>
    <property type="match status" value="1"/>
</dbReference>
<dbReference type="PANTHER" id="PTHR14421:SF3">
    <property type="entry name" value="SPERMATOGENESIS-ASSOCIATED PROTEIN 1"/>
    <property type="match status" value="1"/>
</dbReference>
<dbReference type="Pfam" id="PF15743">
    <property type="entry name" value="SPATA1_C"/>
    <property type="match status" value="1"/>
</dbReference>
<name>SPAT1_HUMAN</name>
<proteinExistence type="evidence at transcript level"/>
<accession>Q5VX52</accession>
<accession>A0A1W2PQB0</accession>
<accession>A0PJU9</accession>
<accession>Q0VDJ9</accession>
<accession>Q0VDK0</accession>
<accession>Q6P386</accession>
<accession>Q9HAR4</accession>
<comment type="subunit">
    <text evidence="1">Interacts with IFT20.</text>
</comment>
<comment type="subcellular location">
    <subcellularLocation>
        <location evidence="1">Cytoplasmic vesicle</location>
        <location evidence="1">Secretory vesicle</location>
        <location evidence="1">Acrosome</location>
    </subcellularLocation>
</comment>
<comment type="alternative products">
    <event type="alternative splicing"/>
    <isoform>
        <id>Q5VX52-1</id>
        <name>1</name>
        <sequence type="displayed"/>
    </isoform>
    <isoform>
        <id>Q5VX52-2</id>
        <name>2</name>
        <sequence type="described" ref="VSP_035223 VSP_035224"/>
    </isoform>
    <isoform>
        <id>Q5VX52-4</id>
        <name>3</name>
        <sequence type="described" ref="VSP_039875"/>
    </isoform>
</comment>
<comment type="miscellaneous">
    <molecule>Isoform 2</molecule>
    <text evidence="7">May be produced at very low levels due to a premature stop codon in the mRNA, leading to nonsense-mediated mRNA decay.</text>
</comment>
<comment type="caution">
    <text evidence="7">It is uncertain whether Met-1 or Met-23 is the initiator.</text>
</comment>
<gene>
    <name type="primary">SPATA1</name>
</gene>
<protein>
    <recommendedName>
        <fullName>Spermatogenesis-associated protein 1</fullName>
    </recommendedName>
    <alternativeName>
        <fullName>Sperm-specific protein SP-2</fullName>
    </alternativeName>
</protein>